<gene>
    <name type="ORF">SCHCODRAFT_28806</name>
</gene>
<feature type="chain" id="PRO_0000435922" description="Probable velvet family sexual development regulator SCHCODRAFT_28806">
    <location>
        <begin position="1"/>
        <end position="278"/>
    </location>
</feature>
<feature type="domain" description="Velvet" evidence="1">
    <location>
        <begin position="51"/>
        <end position="255"/>
    </location>
</feature>
<feature type="region of interest" description="Disordered" evidence="2">
    <location>
        <begin position="257"/>
        <end position="278"/>
    </location>
</feature>
<sequence>MFSQLSTNFYPTILQPQTVHRGTAPPNALPAERAPCLIGRPVHFAHGPFAGRTIRASLDEIQAAQLGRKYARVDRRPLDPPPAVRLRLFNVYNAGTEQQTEEEFEEYGDTLGLGFVCTLDLFPLPEGSSCHRSPGPYAEPPVHRVGGCAIYESEKATNALVGSTFVQPTCVTFEGRSTLVFVFSDLAVKYEGEFLLRYRVFDLFSLPRGHRDIAIQAECYGAAFRIYTTKDFPGLPPSTALTKELARVGVRLSVRDTGKKATTKRRKRSDSFDEDDSS</sequence>
<organism>
    <name type="scientific">Schizophyllum commune (strain H4-8 / FGSC 9210)</name>
    <name type="common">Split gill fungus</name>
    <dbReference type="NCBI Taxonomy" id="578458"/>
    <lineage>
        <taxon>Eukaryota</taxon>
        <taxon>Fungi</taxon>
        <taxon>Dikarya</taxon>
        <taxon>Basidiomycota</taxon>
        <taxon>Agaricomycotina</taxon>
        <taxon>Agaricomycetes</taxon>
        <taxon>Agaricomycetidae</taxon>
        <taxon>Agaricales</taxon>
        <taxon>Schizophyllaceae</taxon>
        <taxon>Schizophyllum</taxon>
    </lineage>
</organism>
<keyword id="KW-0539">Nucleus</keyword>
<keyword id="KW-1185">Reference proteome</keyword>
<keyword id="KW-0749">Sporulation</keyword>
<keyword id="KW-0804">Transcription</keyword>
<keyword id="KW-0805">Transcription regulation</keyword>
<reference key="1">
    <citation type="journal article" date="2010" name="Nat. Biotechnol.">
        <title>Genome sequence of the model mushroom Schizophyllum commune.</title>
        <authorList>
            <person name="Ohm R.A."/>
            <person name="de Jong J.F."/>
            <person name="Lugones L.G."/>
            <person name="Aerts A."/>
            <person name="Kothe E."/>
            <person name="Stajich J.E."/>
            <person name="de Vries R.P."/>
            <person name="Record E."/>
            <person name="Levasseur A."/>
            <person name="Baker S.E."/>
            <person name="Bartholomew K.A."/>
            <person name="Coutinho P.M."/>
            <person name="Erdmann S."/>
            <person name="Fowler T.J."/>
            <person name="Gathman A.C."/>
            <person name="Lombard V."/>
            <person name="Henrissat B."/>
            <person name="Knabe N."/>
            <person name="Kuees U."/>
            <person name="Lilly W.W."/>
            <person name="Lindquist E."/>
            <person name="Lucas S."/>
            <person name="Magnuson J.K."/>
            <person name="Piumi F."/>
            <person name="Raudaskoski M."/>
            <person name="Salamov A."/>
            <person name="Schmutz J."/>
            <person name="Schwarze F.W.M.R."/>
            <person name="vanKuyk P.A."/>
            <person name="Horton J.S."/>
            <person name="Grigoriev I.V."/>
            <person name="Woesten H.A.B."/>
        </authorList>
    </citation>
    <scope>NUCLEOTIDE SEQUENCE [LARGE SCALE GENOMIC DNA]</scope>
    <source>
        <strain evidence="6">H4-8 / FGSC 9210</strain>
    </source>
</reference>
<reference key="2">
    <citation type="journal article" date="2014" name="BMC Genomics">
        <title>Comparative transcriptomics of the model mushroom Coprinopsis cinerea reveals tissue-specific armories and a conserved circuitry for sexual development.</title>
        <authorList>
            <person name="Plaza D.F."/>
            <person name="Lin C.W."/>
            <person name="van der Velden N.S."/>
            <person name="Aebi M."/>
            <person name="Kuenzler M."/>
        </authorList>
    </citation>
    <scope>INDUCTION</scope>
</reference>
<name>VEL_SCHCM</name>
<dbReference type="EMBL" id="GL377307">
    <property type="protein sequence ID" value="EFI96489.1"/>
    <property type="status" value="ALT_SEQ"/>
    <property type="molecule type" value="Genomic_DNA"/>
</dbReference>
<dbReference type="RefSeq" id="XP_003031392.1">
    <property type="nucleotide sequence ID" value="XM_003031346.1"/>
</dbReference>
<dbReference type="SMR" id="D8Q7V2"/>
<dbReference type="VEuPathDB" id="FungiDB:SCHCODRAFT_02628808"/>
<dbReference type="eggNOG" id="ENOG502SSVH">
    <property type="taxonomic scope" value="Eukaryota"/>
</dbReference>
<dbReference type="HOGENOM" id="CLU_044751_1_0_1"/>
<dbReference type="InParanoid" id="D8Q7V2"/>
<dbReference type="Proteomes" id="UP000007431">
    <property type="component" value="Unassembled WGS sequence"/>
</dbReference>
<dbReference type="GO" id="GO:0005634">
    <property type="term" value="C:nucleus"/>
    <property type="evidence" value="ECO:0007669"/>
    <property type="project" value="UniProtKB-SubCell"/>
</dbReference>
<dbReference type="GO" id="GO:0030435">
    <property type="term" value="P:sporulation resulting in formation of a cellular spore"/>
    <property type="evidence" value="ECO:0007669"/>
    <property type="project" value="UniProtKB-KW"/>
</dbReference>
<dbReference type="Gene3D" id="2.60.40.3960">
    <property type="entry name" value="Velvet domain"/>
    <property type="match status" value="1"/>
</dbReference>
<dbReference type="InterPro" id="IPR021740">
    <property type="entry name" value="Velvet"/>
</dbReference>
<dbReference type="InterPro" id="IPR037525">
    <property type="entry name" value="Velvet_dom"/>
</dbReference>
<dbReference type="InterPro" id="IPR038491">
    <property type="entry name" value="Velvet_dom_sf"/>
</dbReference>
<dbReference type="PANTHER" id="PTHR33572">
    <property type="entry name" value="SPORE DEVELOPMENT REGULATOR VOSA"/>
    <property type="match status" value="1"/>
</dbReference>
<dbReference type="PANTHER" id="PTHR33572:SF3">
    <property type="entry name" value="VELVET COMPLEX SUBUNIT B"/>
    <property type="match status" value="1"/>
</dbReference>
<dbReference type="Pfam" id="PF11754">
    <property type="entry name" value="Velvet"/>
    <property type="match status" value="1"/>
</dbReference>
<dbReference type="PROSITE" id="PS51821">
    <property type="entry name" value="VELVET"/>
    <property type="match status" value="1"/>
</dbReference>
<protein>
    <recommendedName>
        <fullName evidence="4">Probable velvet family sexual development regulator SCHCODRAFT_28806</fullName>
    </recommendedName>
</protein>
<comment type="function">
    <text evidence="5">Velvet-domain-containing protein that probably acts as a positive regulator of sexual development.</text>
</comment>
<comment type="subcellular location">
    <subcellularLocation>
        <location evidence="4">Nucleus</location>
    </subcellularLocation>
</comment>
<comment type="induction">
    <text evidence="3">Expression is up-regulated during fruiting body formation (PubMed:24942908).</text>
</comment>
<comment type="similarity">
    <text evidence="4">Belongs to the velvet family.</text>
</comment>
<comment type="sequence caution" evidence="4">
    <conflict type="erroneous gene model prediction">
        <sequence resource="EMBL-CDS" id="EFI96489"/>
    </conflict>
</comment>
<evidence type="ECO:0000255" key="1">
    <source>
        <dbReference type="PROSITE-ProRule" id="PRU01165"/>
    </source>
</evidence>
<evidence type="ECO:0000256" key="2">
    <source>
        <dbReference type="SAM" id="MobiDB-lite"/>
    </source>
</evidence>
<evidence type="ECO:0000269" key="3">
    <source>
    </source>
</evidence>
<evidence type="ECO:0000305" key="4"/>
<evidence type="ECO:0000305" key="5">
    <source>
    </source>
</evidence>
<evidence type="ECO:0000312" key="6">
    <source>
        <dbReference type="Proteomes" id="UP000007431"/>
    </source>
</evidence>
<proteinExistence type="evidence at transcript level"/>
<accession>D8Q7V2</accession>